<dbReference type="EMBL" id="AE006470">
    <property type="protein sequence ID" value="AAM72993.1"/>
    <property type="molecule type" value="Genomic_DNA"/>
</dbReference>
<dbReference type="RefSeq" id="NP_662651.1">
    <property type="nucleotide sequence ID" value="NC_002932.3"/>
</dbReference>
<dbReference type="RefSeq" id="WP_010933432.1">
    <property type="nucleotide sequence ID" value="NC_002932.3"/>
</dbReference>
<dbReference type="PDB" id="1TEL">
    <property type="method" value="X-ray"/>
    <property type="resolution" value="2.70 A"/>
    <property type="chains" value="A/B=1-435"/>
</dbReference>
<dbReference type="PDB" id="1YKW">
    <property type="method" value="X-ray"/>
    <property type="resolution" value="2.00 A"/>
    <property type="chains" value="A/B=1-435"/>
</dbReference>
<dbReference type="PDBsum" id="1TEL"/>
<dbReference type="PDBsum" id="1YKW"/>
<dbReference type="SMR" id="Q8KBL4"/>
<dbReference type="DIP" id="DIP-48441N"/>
<dbReference type="STRING" id="194439.CT1772"/>
<dbReference type="EnsemblBacteria" id="AAM72993">
    <property type="protein sequence ID" value="AAM72993"/>
    <property type="gene ID" value="CT1772"/>
</dbReference>
<dbReference type="KEGG" id="cte:CT1772"/>
<dbReference type="PATRIC" id="fig|194439.7.peg.1606"/>
<dbReference type="eggNOG" id="COG1850">
    <property type="taxonomic scope" value="Bacteria"/>
</dbReference>
<dbReference type="HOGENOM" id="CLU_031450_3_1_10"/>
<dbReference type="OrthoDB" id="9770811at2"/>
<dbReference type="EvolutionaryTrace" id="Q8KBL4"/>
<dbReference type="Proteomes" id="UP000001007">
    <property type="component" value="Chromosome"/>
</dbReference>
<dbReference type="GO" id="GO:0042802">
    <property type="term" value="F:identical protein binding"/>
    <property type="evidence" value="ECO:0000353"/>
    <property type="project" value="IntAct"/>
</dbReference>
<dbReference type="GO" id="GO:0000287">
    <property type="term" value="F:magnesium ion binding"/>
    <property type="evidence" value="ECO:0007669"/>
    <property type="project" value="InterPro"/>
</dbReference>
<dbReference type="GO" id="GO:0015977">
    <property type="term" value="P:carbon fixation"/>
    <property type="evidence" value="ECO:0007669"/>
    <property type="project" value="InterPro"/>
</dbReference>
<dbReference type="CDD" id="cd08208">
    <property type="entry name" value="RLP_Photo"/>
    <property type="match status" value="1"/>
</dbReference>
<dbReference type="FunFam" id="3.20.20.110:FF:000005">
    <property type="entry name" value="Ribulose bisphosphate carboxylase-like protein"/>
    <property type="match status" value="1"/>
</dbReference>
<dbReference type="Gene3D" id="3.20.20.110">
    <property type="entry name" value="Ribulose bisphosphate carboxylase, large subunit, C-terminal domain"/>
    <property type="match status" value="1"/>
</dbReference>
<dbReference type="Gene3D" id="3.30.70.150">
    <property type="entry name" value="RuBisCO large subunit, N-terminal domain"/>
    <property type="match status" value="1"/>
</dbReference>
<dbReference type="InterPro" id="IPR033966">
    <property type="entry name" value="RuBisCO"/>
</dbReference>
<dbReference type="InterPro" id="IPR000685">
    <property type="entry name" value="RuBisCO_lsu_C"/>
</dbReference>
<dbReference type="InterPro" id="IPR036376">
    <property type="entry name" value="RuBisCO_lsu_C_sf"/>
</dbReference>
<dbReference type="InterPro" id="IPR017443">
    <property type="entry name" value="RuBisCO_lsu_fd_N"/>
</dbReference>
<dbReference type="InterPro" id="IPR036422">
    <property type="entry name" value="RuBisCO_lsu_N_sf"/>
</dbReference>
<dbReference type="PANTHER" id="PTHR42704">
    <property type="entry name" value="RIBULOSE BISPHOSPHATE CARBOXYLASE"/>
    <property type="match status" value="1"/>
</dbReference>
<dbReference type="PANTHER" id="PTHR42704:SF17">
    <property type="entry name" value="RIBULOSE BISPHOSPHATE CARBOXYLASE LARGE CHAIN"/>
    <property type="match status" value="1"/>
</dbReference>
<dbReference type="Pfam" id="PF00016">
    <property type="entry name" value="RuBisCO_large"/>
    <property type="match status" value="1"/>
</dbReference>
<dbReference type="Pfam" id="PF02788">
    <property type="entry name" value="RuBisCO_large_N"/>
    <property type="match status" value="1"/>
</dbReference>
<dbReference type="SFLD" id="SFLDS00014">
    <property type="entry name" value="RuBisCO"/>
    <property type="match status" value="1"/>
</dbReference>
<dbReference type="SFLD" id="SFLDG00301">
    <property type="entry name" value="RuBisCO-like_proteins"/>
    <property type="match status" value="1"/>
</dbReference>
<dbReference type="SUPFAM" id="SSF51649">
    <property type="entry name" value="RuBisCo, C-terminal domain"/>
    <property type="match status" value="1"/>
</dbReference>
<dbReference type="SUPFAM" id="SSF54966">
    <property type="entry name" value="RuBisCO, large subunit, small (N-terminal) domain"/>
    <property type="match status" value="1"/>
</dbReference>
<evidence type="ECO:0000250" key="1"/>
<evidence type="ECO:0000255" key="2"/>
<evidence type="ECO:0000269" key="3">
    <source>
    </source>
</evidence>
<evidence type="ECO:0000269" key="4">
    <source>
    </source>
</evidence>
<evidence type="ECO:0000305" key="5"/>
<evidence type="ECO:0007829" key="6">
    <source>
        <dbReference type="PDB" id="1YKW"/>
    </source>
</evidence>
<proteinExistence type="evidence at protein level"/>
<comment type="function">
    <text evidence="3 4">May be involved in sulfur metabolism and oxidative stress response. Does not show RuBisCO activity.</text>
</comment>
<comment type="cofactor">
    <cofactor evidence="1">
        <name>Mg(2+)</name>
        <dbReference type="ChEBI" id="CHEBI:18420"/>
    </cofactor>
    <text evidence="1">Binds 1 Mg(2+) ion per subunit.</text>
</comment>
<comment type="subunit">
    <text evidence="4">Homodimer.</text>
</comment>
<comment type="interaction">
    <interactant intactId="EBI-15552219">
        <id>Q8KBL4</id>
    </interactant>
    <interactant intactId="EBI-15552219">
        <id>Q8KBL4</id>
        <label>CT1772</label>
    </interactant>
    <organismsDiffer>false</organismsDiffer>
    <experiments>2</experiments>
</comment>
<comment type="similarity">
    <text evidence="5">Belongs to the RuBisCO large chain family. Type IV subfamily.</text>
</comment>
<comment type="caution">
    <text evidence="5">Although strongly related to RuBisCO family, it lacks the conserved Lys active site in position 327, which is replaced by an Arg residue, suggesting that it may catalyze enolization but not carboxylation.</text>
</comment>
<accession>Q8KBL4</accession>
<reference key="1">
    <citation type="journal article" date="2002" name="Proc. Natl. Acad. Sci. U.S.A.">
        <title>The complete genome sequence of Chlorobium tepidum TLS, a photosynthetic, anaerobic, green-sulfur bacterium.</title>
        <authorList>
            <person name="Eisen J.A."/>
            <person name="Nelson K.E."/>
            <person name="Paulsen I.T."/>
            <person name="Heidelberg J.F."/>
            <person name="Wu M."/>
            <person name="Dodson R.J."/>
            <person name="DeBoy R.T."/>
            <person name="Gwinn M.L."/>
            <person name="Nelson W.C."/>
            <person name="Haft D.H."/>
            <person name="Hickey E.K."/>
            <person name="Peterson J.D."/>
            <person name="Durkin A.S."/>
            <person name="Kolonay J.F."/>
            <person name="Yang F."/>
            <person name="Holt I.E."/>
            <person name="Umayam L.A."/>
            <person name="Mason T.M."/>
            <person name="Brenner M."/>
            <person name="Shea T.P."/>
            <person name="Parksey D.S."/>
            <person name="Nierman W.C."/>
            <person name="Feldblyum T.V."/>
            <person name="Hansen C.L."/>
            <person name="Craven M.B."/>
            <person name="Radune D."/>
            <person name="Vamathevan J.J."/>
            <person name="Khouri H.M."/>
            <person name="White O."/>
            <person name="Gruber T.M."/>
            <person name="Ketchum K.A."/>
            <person name="Venter J.C."/>
            <person name="Tettelin H."/>
            <person name="Bryant D.A."/>
            <person name="Fraser C.M."/>
        </authorList>
    </citation>
    <scope>NUCLEOTIDE SEQUENCE [LARGE SCALE GENOMIC DNA]</scope>
    <source>
        <strain>ATCC 49652 / DSM 12025 / NBRC 103806 / TLS</strain>
    </source>
</reference>
<reference evidence="5" key="2">
    <citation type="journal article" date="2001" name="Proc. Natl. Acad. Sci. U.S.A.">
        <title>A ribulose-1,5-bisphosphate carboxylase/oxygenase (RubisCO)-like protein from Chlorobium tepidum that is involved with sulfur metabolism and the response to oxidative stress.</title>
        <authorList>
            <person name="Hanson T.E."/>
            <person name="Tabita F.R."/>
        </authorList>
    </citation>
    <scope>FUNCTION</scope>
    <source>
        <strain evidence="3">WT2321</strain>
    </source>
</reference>
<reference evidence="5" key="3">
    <citation type="journal article" date="2005" name="Structure">
        <title>Crystal structure of a RuBisCO-like protein from the green sulfur bacterium Chlorobium tepidum.</title>
        <authorList>
            <person name="Li H."/>
            <person name="Sawaya M.R."/>
            <person name="Tabita F.R."/>
            <person name="Eisenberg D."/>
        </authorList>
    </citation>
    <scope>X-RAY CRYSTALLOGRAPHY (2.0 ANGSTROMS)</scope>
    <scope>FUNCTION</scope>
    <scope>SUBUNIT</scope>
    <source>
        <strain evidence="4">WT2321</strain>
    </source>
</reference>
<reference evidence="5" key="4">
    <citation type="submission" date="2004-05" db="PDB data bank">
        <title>Crystal structure of a RuBisCO-like protein from Chlorobium tepidum.</title>
        <authorList>
            <person name="Fedorov A.A."/>
            <person name="Fedorov E.V."/>
            <person name="Imker H.J."/>
            <person name="Gerlt J.A."/>
            <person name="Almo S.C."/>
        </authorList>
    </citation>
    <scope>X-RAY CRYSTALLOGRAPHY (2.7 ANGSTROMS)</scope>
    <source>
        <strain>ATCC 49652 / DSM 12025 / NBRC 103806 / TLS</strain>
    </source>
</reference>
<name>RBLL_CHLTE</name>
<feature type="chain" id="PRO_0000062679" description="Ribulose bisphosphate carboxylase-like protein">
    <location>
        <begin position="1"/>
        <end position="435"/>
    </location>
</feature>
<feature type="binding site" description="via carbamate group" evidence="2">
    <location>
        <position position="198"/>
    </location>
    <ligand>
        <name>Mg(2+)</name>
        <dbReference type="ChEBI" id="CHEBI:18420"/>
    </ligand>
</feature>
<feature type="binding site" evidence="1">
    <location>
        <position position="200"/>
    </location>
    <ligand>
        <name>Mg(2+)</name>
        <dbReference type="ChEBI" id="CHEBI:18420"/>
    </ligand>
</feature>
<feature type="binding site" evidence="1">
    <location>
        <position position="201"/>
    </location>
    <ligand>
        <name>Mg(2+)</name>
        <dbReference type="ChEBI" id="CHEBI:18420"/>
    </ligand>
</feature>
<feature type="modified residue" description="N6-carboxylysine" evidence="2">
    <location>
        <position position="198"/>
    </location>
</feature>
<feature type="helix" evidence="6">
    <location>
        <begin position="6"/>
        <end position="9"/>
    </location>
</feature>
<feature type="helix" evidence="6">
    <location>
        <begin position="13"/>
        <end position="15"/>
    </location>
</feature>
<feature type="helix" evidence="6">
    <location>
        <begin position="18"/>
        <end position="20"/>
    </location>
</feature>
<feature type="strand" evidence="6">
    <location>
        <begin position="21"/>
        <end position="32"/>
    </location>
</feature>
<feature type="helix" evidence="6">
    <location>
        <begin position="34"/>
        <end position="44"/>
    </location>
</feature>
<feature type="turn" evidence="6">
    <location>
        <begin position="61"/>
        <end position="63"/>
    </location>
</feature>
<feature type="strand" evidence="6">
    <location>
        <begin position="66"/>
        <end position="78"/>
    </location>
</feature>
<feature type="strand" evidence="6">
    <location>
        <begin position="91"/>
        <end position="101"/>
    </location>
</feature>
<feature type="helix" evidence="6">
    <location>
        <begin position="102"/>
        <end position="104"/>
    </location>
</feature>
<feature type="helix" evidence="6">
    <location>
        <begin position="109"/>
        <end position="116"/>
    </location>
</feature>
<feature type="helix" evidence="6">
    <location>
        <begin position="119"/>
        <end position="122"/>
    </location>
</feature>
<feature type="strand" evidence="6">
    <location>
        <begin position="129"/>
        <end position="136"/>
    </location>
</feature>
<feature type="helix" evidence="6">
    <location>
        <begin position="139"/>
        <end position="142"/>
    </location>
</feature>
<feature type="helix" evidence="6">
    <location>
        <begin position="151"/>
        <end position="159"/>
    </location>
</feature>
<feature type="strand" evidence="6">
    <location>
        <begin position="166"/>
        <end position="170"/>
    </location>
</feature>
<feature type="helix" evidence="6">
    <location>
        <begin position="179"/>
        <end position="191"/>
    </location>
</feature>
<feature type="strand" evidence="6">
    <location>
        <begin position="195"/>
        <end position="198"/>
    </location>
</feature>
<feature type="strand" evidence="6">
    <location>
        <begin position="204"/>
        <end position="206"/>
    </location>
</feature>
<feature type="helix" evidence="6">
    <location>
        <begin position="211"/>
        <end position="229"/>
    </location>
</feature>
<feature type="strand" evidence="6">
    <location>
        <begin position="234"/>
        <end position="238"/>
    </location>
</feature>
<feature type="helix" evidence="6">
    <location>
        <begin position="243"/>
        <end position="245"/>
    </location>
</feature>
<feature type="helix" evidence="6">
    <location>
        <begin position="246"/>
        <end position="256"/>
    </location>
</feature>
<feature type="strand" evidence="6">
    <location>
        <begin position="260"/>
        <end position="264"/>
    </location>
</feature>
<feature type="helix" evidence="6">
    <location>
        <begin position="265"/>
        <end position="268"/>
    </location>
</feature>
<feature type="helix" evidence="6">
    <location>
        <begin position="270"/>
        <end position="279"/>
    </location>
</feature>
<feature type="strand" evidence="6">
    <location>
        <begin position="284"/>
        <end position="287"/>
    </location>
</feature>
<feature type="turn" evidence="6">
    <location>
        <begin position="289"/>
        <end position="291"/>
    </location>
</feature>
<feature type="helix" evidence="6">
    <location>
        <begin position="292"/>
        <end position="295"/>
    </location>
</feature>
<feature type="strand" evidence="6">
    <location>
        <begin position="300"/>
        <end position="302"/>
    </location>
</feature>
<feature type="helix" evidence="6">
    <location>
        <begin position="304"/>
        <end position="314"/>
    </location>
</feature>
<feature type="strand" evidence="6">
    <location>
        <begin position="317"/>
        <end position="322"/>
    </location>
</feature>
<feature type="strand" evidence="6">
    <location>
        <begin position="328"/>
        <end position="330"/>
    </location>
</feature>
<feature type="helix" evidence="6">
    <location>
        <begin position="332"/>
        <end position="343"/>
    </location>
</feature>
<feature type="strand" evidence="6">
    <location>
        <begin position="353"/>
        <end position="357"/>
    </location>
</feature>
<feature type="turn" evidence="6">
    <location>
        <begin position="362"/>
        <end position="364"/>
    </location>
</feature>
<feature type="helix" evidence="6">
    <location>
        <begin position="365"/>
        <end position="372"/>
    </location>
</feature>
<feature type="strand" evidence="6">
    <location>
        <begin position="377"/>
        <end position="379"/>
    </location>
</feature>
<feature type="strand" evidence="6">
    <location>
        <begin position="381"/>
        <end position="387"/>
    </location>
</feature>
<feature type="helix" evidence="6">
    <location>
        <begin position="392"/>
        <end position="407"/>
    </location>
</feature>
<feature type="helix" evidence="6">
    <location>
        <begin position="412"/>
        <end position="416"/>
    </location>
</feature>
<feature type="helix" evidence="6">
    <location>
        <begin position="420"/>
        <end position="427"/>
    </location>
</feature>
<keyword id="KW-0002">3D-structure</keyword>
<keyword id="KW-0460">Magnesium</keyword>
<keyword id="KW-0479">Metal-binding</keyword>
<keyword id="KW-1185">Reference proteome</keyword>
<organism>
    <name type="scientific">Chlorobaculum tepidum (strain ATCC 49652 / DSM 12025 / NBRC 103806 / TLS)</name>
    <name type="common">Chlorobium tepidum</name>
    <dbReference type="NCBI Taxonomy" id="194439"/>
    <lineage>
        <taxon>Bacteria</taxon>
        <taxon>Pseudomonadati</taxon>
        <taxon>Chlorobiota</taxon>
        <taxon>Chlorobiia</taxon>
        <taxon>Chlorobiales</taxon>
        <taxon>Chlorobiaceae</taxon>
        <taxon>Chlorobaculum</taxon>
    </lineage>
</organism>
<protein>
    <recommendedName>
        <fullName>Ribulose bisphosphate carboxylase-like protein</fullName>
        <shortName>RuBisCO-like protein</shortName>
    </recommendedName>
</protein>
<gene>
    <name type="ordered locus">CT1772</name>
</gene>
<sequence length="435" mass="48003">MNAEDVKGFFASRESLDMEQYLVLDYYLESVGDIETALAHFCSEQSTAQWKRVGVDEDFRLVHAAKVIDYEVIEELEQLSYPVKHSETGKIHACRVTIAHPHCNFGPKIPNLLTAVCGEGTYFTPGVPVVKLMDIHFPDTYLADFEGPKFGIEGLRDILNAHGRPIFFGVVKPNIGLSPGEFAEIAYQSWLGGLDIAKDDEMLADVTWSSIEERAAHLGKARRKAEAETGEPKIYLANITDEVDSLMEKHDVAVRNGANALLINALPVGLSAVRMLSNYTQVPLIGHFPFIASFSRMEKYGIHSKVMTKLQRLAGLDAVIMPGFGDRMMTPEEEVLENVIECTKPMGRIKPCLPVPGGSDSALTLQTVYEKVGNVDFGFVPGRGVFGHPMGPKAGAKSIRQAWEAIEQGISIETWAETHPELQAMVDQSLLKKQD</sequence>